<keyword id="KW-0067">ATP-binding</keyword>
<keyword id="KW-1003">Cell membrane</keyword>
<keyword id="KW-0378">Hydrolase</keyword>
<keyword id="KW-0472">Membrane</keyword>
<keyword id="KW-0479">Metal-binding</keyword>
<keyword id="KW-0482">Metalloprotease</keyword>
<keyword id="KW-0547">Nucleotide-binding</keyword>
<keyword id="KW-0645">Protease</keyword>
<keyword id="KW-1185">Reference proteome</keyword>
<keyword id="KW-0812">Transmembrane</keyword>
<keyword id="KW-1133">Transmembrane helix</keyword>
<keyword id="KW-0862">Zinc</keyword>
<reference key="1">
    <citation type="journal article" date="2016" name="Genome Announc.">
        <title>Complete genome sequence of Alkaliphilus metalliredigens strain QYMF, an alkaliphilic and metal-reducing bacterium isolated from borax-contaminated leachate ponds.</title>
        <authorList>
            <person name="Hwang C."/>
            <person name="Copeland A."/>
            <person name="Lucas S."/>
            <person name="Lapidus A."/>
            <person name="Barry K."/>
            <person name="Detter J.C."/>
            <person name="Glavina Del Rio T."/>
            <person name="Hammon N."/>
            <person name="Israni S."/>
            <person name="Dalin E."/>
            <person name="Tice H."/>
            <person name="Pitluck S."/>
            <person name="Chertkov O."/>
            <person name="Brettin T."/>
            <person name="Bruce D."/>
            <person name="Han C."/>
            <person name="Schmutz J."/>
            <person name="Larimer F."/>
            <person name="Land M.L."/>
            <person name="Hauser L."/>
            <person name="Kyrpides N."/>
            <person name="Mikhailova N."/>
            <person name="Ye Q."/>
            <person name="Zhou J."/>
            <person name="Richardson P."/>
            <person name="Fields M.W."/>
        </authorList>
    </citation>
    <scope>NUCLEOTIDE SEQUENCE [LARGE SCALE GENOMIC DNA]</scope>
    <source>
        <strain>QYMF</strain>
    </source>
</reference>
<feature type="chain" id="PRO_0000400322" description="ATP-dependent zinc metalloprotease FtsH 2">
    <location>
        <begin position="1"/>
        <end position="689"/>
    </location>
</feature>
<feature type="topological domain" description="Cytoplasmic" evidence="1">
    <location>
        <begin position="1"/>
        <end position="3"/>
    </location>
</feature>
<feature type="transmembrane region" description="Helical" evidence="1">
    <location>
        <begin position="4"/>
        <end position="24"/>
    </location>
</feature>
<feature type="topological domain" description="Extracellular" evidence="1">
    <location>
        <begin position="25"/>
        <end position="111"/>
    </location>
</feature>
<feature type="transmembrane region" description="Helical" evidence="1">
    <location>
        <begin position="112"/>
        <end position="132"/>
    </location>
</feature>
<feature type="topological domain" description="Cytoplasmic" evidence="1">
    <location>
        <begin position="133"/>
        <end position="689"/>
    </location>
</feature>
<feature type="region of interest" description="Disordered" evidence="2">
    <location>
        <begin position="661"/>
        <end position="689"/>
    </location>
</feature>
<feature type="compositionally biased region" description="Basic and acidic residues" evidence="2">
    <location>
        <begin position="661"/>
        <end position="673"/>
    </location>
</feature>
<feature type="active site" evidence="1">
    <location>
        <position position="428"/>
    </location>
</feature>
<feature type="binding site" evidence="1">
    <location>
        <begin position="205"/>
        <end position="212"/>
    </location>
    <ligand>
        <name>ATP</name>
        <dbReference type="ChEBI" id="CHEBI:30616"/>
    </ligand>
</feature>
<feature type="binding site" evidence="1">
    <location>
        <position position="427"/>
    </location>
    <ligand>
        <name>Zn(2+)</name>
        <dbReference type="ChEBI" id="CHEBI:29105"/>
        <note>catalytic</note>
    </ligand>
</feature>
<feature type="binding site" evidence="1">
    <location>
        <position position="431"/>
    </location>
    <ligand>
        <name>Zn(2+)</name>
        <dbReference type="ChEBI" id="CHEBI:29105"/>
        <note>catalytic</note>
    </ligand>
</feature>
<feature type="binding site" evidence="1">
    <location>
        <position position="503"/>
    </location>
    <ligand>
        <name>Zn(2+)</name>
        <dbReference type="ChEBI" id="CHEBI:29105"/>
        <note>catalytic</note>
    </ligand>
</feature>
<gene>
    <name evidence="1" type="primary">ftsH2</name>
    <name type="ordered locus">Amet_4543</name>
</gene>
<comment type="function">
    <text evidence="1">Acts as a processive, ATP-dependent zinc metallopeptidase for both cytoplasmic and membrane proteins. Plays a role in the quality control of integral membrane proteins.</text>
</comment>
<comment type="cofactor">
    <cofactor evidence="1">
        <name>Zn(2+)</name>
        <dbReference type="ChEBI" id="CHEBI:29105"/>
    </cofactor>
    <text evidence="1">Binds 1 zinc ion per subunit.</text>
</comment>
<comment type="subunit">
    <text evidence="1">Homohexamer.</text>
</comment>
<comment type="subcellular location">
    <subcellularLocation>
        <location evidence="1">Cell membrane</location>
        <topology evidence="1">Multi-pass membrane protein</topology>
        <orientation evidence="1">Cytoplasmic side</orientation>
    </subcellularLocation>
</comment>
<comment type="similarity">
    <text evidence="1">In the central section; belongs to the AAA ATPase family.</text>
</comment>
<comment type="similarity">
    <text evidence="1">In the C-terminal section; belongs to the peptidase M41 family.</text>
</comment>
<evidence type="ECO:0000255" key="1">
    <source>
        <dbReference type="HAMAP-Rule" id="MF_01458"/>
    </source>
</evidence>
<evidence type="ECO:0000256" key="2">
    <source>
        <dbReference type="SAM" id="MobiDB-lite"/>
    </source>
</evidence>
<proteinExistence type="inferred from homology"/>
<protein>
    <recommendedName>
        <fullName evidence="1">ATP-dependent zinc metalloprotease FtsH 2</fullName>
        <ecNumber evidence="1">3.4.24.-</ecNumber>
    </recommendedName>
</protein>
<sequence length="689" mass="77283">MRKFFRGASFYILAFIIILFIVQNFGRPTQEIDELDFSEFYRALVNDRVTEAHLVERSVEGIWVNNNNEEMSYRSFVPEVFSEERLTLIIEEKIDQEGLRVSAAPPPTTPWFIELLPSIFMVLIFIVFWFVFMQQSQGGGNRVMSFGKSKAKLHKDDEGKRITFDDVAGLDEEKAEVEELVDFLKNPKKYIELGARIPKGILMIGPPGTGKTYLTKAVAGEAGVPFFSISGSDFVEMFVGVGASRVRDLFEQAKKSAPCIIFIDEIDAVGRKRGAGLGGGHDEREQTLNQLLVEMDGFGINEGIIIVAATNRPDILDPALLRPGRFDRQVMVGAPDIKGREQILQVHAKGKPLDEDVNLKVLARRTPGFTPADIENLMNEAALLTARKNEKKIKMETVEEAITKVIAGLEKKSRVISEKERKLTAYHEAGHAVVAKLLTHTDPVHQVTIIPRGRAGGFTMTLPTEDKYYVTKTEMQEHIVHLLGGRVAEKLVLHDISTGASNDLQRVSSIARAMVTQYGMSDKLGSMTFGDGDSEVFLGRDFTSKHNYSEEVAAEIDQEIRKFVEEAYMLTEKLLTENMDKLHVIAQALLKLETLDADAFEMIFTGEIVIGKDDQLEDIQPKLNVVKAKKRAAEAAEEAEVAKEDAKKQDVKVSLKKQEKEELIEVSSDKEEEKDNQDDQDNEENRKEE</sequence>
<organism>
    <name type="scientific">Alkaliphilus metalliredigens (strain QYMF)</name>
    <dbReference type="NCBI Taxonomy" id="293826"/>
    <lineage>
        <taxon>Bacteria</taxon>
        <taxon>Bacillati</taxon>
        <taxon>Bacillota</taxon>
        <taxon>Clostridia</taxon>
        <taxon>Peptostreptococcales</taxon>
        <taxon>Natronincolaceae</taxon>
        <taxon>Alkaliphilus</taxon>
    </lineage>
</organism>
<accession>A6TWP7</accession>
<dbReference type="EC" id="3.4.24.-" evidence="1"/>
<dbReference type="EMBL" id="CP000724">
    <property type="protein sequence ID" value="ABR50615.1"/>
    <property type="molecule type" value="Genomic_DNA"/>
</dbReference>
<dbReference type="RefSeq" id="WP_012065503.1">
    <property type="nucleotide sequence ID" value="NC_009633.1"/>
</dbReference>
<dbReference type="SMR" id="A6TWP7"/>
<dbReference type="STRING" id="293826.Amet_4543"/>
<dbReference type="MEROPS" id="M41.009"/>
<dbReference type="KEGG" id="amt:Amet_4543"/>
<dbReference type="eggNOG" id="COG0465">
    <property type="taxonomic scope" value="Bacteria"/>
</dbReference>
<dbReference type="HOGENOM" id="CLU_000688_16_1_9"/>
<dbReference type="OrthoDB" id="9809379at2"/>
<dbReference type="Proteomes" id="UP000001572">
    <property type="component" value="Chromosome"/>
</dbReference>
<dbReference type="GO" id="GO:0005886">
    <property type="term" value="C:plasma membrane"/>
    <property type="evidence" value="ECO:0007669"/>
    <property type="project" value="UniProtKB-SubCell"/>
</dbReference>
<dbReference type="GO" id="GO:0005524">
    <property type="term" value="F:ATP binding"/>
    <property type="evidence" value="ECO:0007669"/>
    <property type="project" value="UniProtKB-UniRule"/>
</dbReference>
<dbReference type="GO" id="GO:0016887">
    <property type="term" value="F:ATP hydrolysis activity"/>
    <property type="evidence" value="ECO:0007669"/>
    <property type="project" value="UniProtKB-UniRule"/>
</dbReference>
<dbReference type="GO" id="GO:0004176">
    <property type="term" value="F:ATP-dependent peptidase activity"/>
    <property type="evidence" value="ECO:0007669"/>
    <property type="project" value="InterPro"/>
</dbReference>
<dbReference type="GO" id="GO:0004222">
    <property type="term" value="F:metalloendopeptidase activity"/>
    <property type="evidence" value="ECO:0007669"/>
    <property type="project" value="InterPro"/>
</dbReference>
<dbReference type="GO" id="GO:0008270">
    <property type="term" value="F:zinc ion binding"/>
    <property type="evidence" value="ECO:0007669"/>
    <property type="project" value="UniProtKB-UniRule"/>
</dbReference>
<dbReference type="GO" id="GO:0030163">
    <property type="term" value="P:protein catabolic process"/>
    <property type="evidence" value="ECO:0007669"/>
    <property type="project" value="UniProtKB-UniRule"/>
</dbReference>
<dbReference type="GO" id="GO:0006508">
    <property type="term" value="P:proteolysis"/>
    <property type="evidence" value="ECO:0007669"/>
    <property type="project" value="UniProtKB-KW"/>
</dbReference>
<dbReference type="CDD" id="cd19501">
    <property type="entry name" value="RecA-like_FtsH"/>
    <property type="match status" value="1"/>
</dbReference>
<dbReference type="FunFam" id="1.10.8.60:FF:000001">
    <property type="entry name" value="ATP-dependent zinc metalloprotease FtsH"/>
    <property type="match status" value="1"/>
</dbReference>
<dbReference type="FunFam" id="1.20.58.760:FF:000001">
    <property type="entry name" value="ATP-dependent zinc metalloprotease FtsH"/>
    <property type="match status" value="1"/>
</dbReference>
<dbReference type="FunFam" id="3.40.50.300:FF:000001">
    <property type="entry name" value="ATP-dependent zinc metalloprotease FtsH"/>
    <property type="match status" value="1"/>
</dbReference>
<dbReference type="Gene3D" id="1.10.8.60">
    <property type="match status" value="1"/>
</dbReference>
<dbReference type="Gene3D" id="3.40.50.300">
    <property type="entry name" value="P-loop containing nucleotide triphosphate hydrolases"/>
    <property type="match status" value="1"/>
</dbReference>
<dbReference type="Gene3D" id="1.20.58.760">
    <property type="entry name" value="Peptidase M41"/>
    <property type="match status" value="1"/>
</dbReference>
<dbReference type="HAMAP" id="MF_01458">
    <property type="entry name" value="FtsH"/>
    <property type="match status" value="1"/>
</dbReference>
<dbReference type="InterPro" id="IPR003593">
    <property type="entry name" value="AAA+_ATPase"/>
</dbReference>
<dbReference type="InterPro" id="IPR041569">
    <property type="entry name" value="AAA_lid_3"/>
</dbReference>
<dbReference type="InterPro" id="IPR003959">
    <property type="entry name" value="ATPase_AAA_core"/>
</dbReference>
<dbReference type="InterPro" id="IPR003960">
    <property type="entry name" value="ATPase_AAA_CS"/>
</dbReference>
<dbReference type="InterPro" id="IPR005936">
    <property type="entry name" value="FtsH"/>
</dbReference>
<dbReference type="InterPro" id="IPR027417">
    <property type="entry name" value="P-loop_NTPase"/>
</dbReference>
<dbReference type="InterPro" id="IPR011546">
    <property type="entry name" value="Pept_M41_FtsH_extracell"/>
</dbReference>
<dbReference type="InterPro" id="IPR000642">
    <property type="entry name" value="Peptidase_M41"/>
</dbReference>
<dbReference type="InterPro" id="IPR037219">
    <property type="entry name" value="Peptidase_M41-like"/>
</dbReference>
<dbReference type="NCBIfam" id="TIGR01241">
    <property type="entry name" value="FtsH_fam"/>
    <property type="match status" value="1"/>
</dbReference>
<dbReference type="PANTHER" id="PTHR23076:SF113">
    <property type="entry name" value="ATP-DEPENDENT ZINC METALLOPROTEASE FTSH 1, CHLOROPLASTIC-RELATED"/>
    <property type="match status" value="1"/>
</dbReference>
<dbReference type="PANTHER" id="PTHR23076">
    <property type="entry name" value="METALLOPROTEASE M41 FTSH"/>
    <property type="match status" value="1"/>
</dbReference>
<dbReference type="Pfam" id="PF00004">
    <property type="entry name" value="AAA"/>
    <property type="match status" value="1"/>
</dbReference>
<dbReference type="Pfam" id="PF17862">
    <property type="entry name" value="AAA_lid_3"/>
    <property type="match status" value="1"/>
</dbReference>
<dbReference type="Pfam" id="PF06480">
    <property type="entry name" value="FtsH_ext"/>
    <property type="match status" value="1"/>
</dbReference>
<dbReference type="Pfam" id="PF01434">
    <property type="entry name" value="Peptidase_M41"/>
    <property type="match status" value="1"/>
</dbReference>
<dbReference type="SMART" id="SM00382">
    <property type="entry name" value="AAA"/>
    <property type="match status" value="1"/>
</dbReference>
<dbReference type="SUPFAM" id="SSF140990">
    <property type="entry name" value="FtsH protease domain-like"/>
    <property type="match status" value="1"/>
</dbReference>
<dbReference type="SUPFAM" id="SSF52540">
    <property type="entry name" value="P-loop containing nucleoside triphosphate hydrolases"/>
    <property type="match status" value="1"/>
</dbReference>
<dbReference type="PROSITE" id="PS00674">
    <property type="entry name" value="AAA"/>
    <property type="match status" value="1"/>
</dbReference>
<name>FTSH2_ALKMQ</name>